<proteinExistence type="inferred from homology"/>
<sequence length="181" mass="19951">MSVEVTNETAWQIDGKIFSDLGVWVMSQMRVSTQSDLTIMFVDPDPIAQLHMRWMNLEGPTDVMSFPMDELRPGDGGTEMEGVLGDIVLCPWVAAQQALAAGHSTMEEMMLLTIHGILHLLGYDHVTPEQERQMFGLQRQLLLTFFALRQGAGARATLPAGTPDALAEWDREHAAGGKTAK</sequence>
<organism>
    <name type="scientific">Bifidobacterium adolescentis (strain ATCC 15703 / DSM 20083 / NCTC 11814 / E194a)</name>
    <dbReference type="NCBI Taxonomy" id="367928"/>
    <lineage>
        <taxon>Bacteria</taxon>
        <taxon>Bacillati</taxon>
        <taxon>Actinomycetota</taxon>
        <taxon>Actinomycetes</taxon>
        <taxon>Bifidobacteriales</taxon>
        <taxon>Bifidobacteriaceae</taxon>
        <taxon>Bifidobacterium</taxon>
    </lineage>
</organism>
<accession>A1A1B9</accession>
<feature type="chain" id="PRO_0000284165" description="Endoribonuclease YbeY">
    <location>
        <begin position="1"/>
        <end position="181"/>
    </location>
</feature>
<feature type="binding site" evidence="1">
    <location>
        <position position="115"/>
    </location>
    <ligand>
        <name>Zn(2+)</name>
        <dbReference type="ChEBI" id="CHEBI:29105"/>
        <note>catalytic</note>
    </ligand>
</feature>
<feature type="binding site" evidence="1">
    <location>
        <position position="119"/>
    </location>
    <ligand>
        <name>Zn(2+)</name>
        <dbReference type="ChEBI" id="CHEBI:29105"/>
        <note>catalytic</note>
    </ligand>
</feature>
<feature type="binding site" evidence="1">
    <location>
        <position position="125"/>
    </location>
    <ligand>
        <name>Zn(2+)</name>
        <dbReference type="ChEBI" id="CHEBI:29105"/>
        <note>catalytic</note>
    </ligand>
</feature>
<name>YBEY_BIFAA</name>
<reference key="1">
    <citation type="submission" date="2006-12" db="EMBL/GenBank/DDBJ databases">
        <title>Bifidobacterium adolescentis complete genome sequence.</title>
        <authorList>
            <person name="Suzuki T."/>
            <person name="Tsuda Y."/>
            <person name="Kanou N."/>
            <person name="Inoue T."/>
            <person name="Kumazaki K."/>
            <person name="Nagano S."/>
            <person name="Hirai S."/>
            <person name="Tanaka K."/>
            <person name="Watanabe K."/>
        </authorList>
    </citation>
    <scope>NUCLEOTIDE SEQUENCE [LARGE SCALE GENOMIC DNA]</scope>
    <source>
        <strain>ATCC 15703 / DSM 20083 / NCTC 11814 / E194a</strain>
    </source>
</reference>
<comment type="function">
    <text evidence="1">Single strand-specific metallo-endoribonuclease involved in late-stage 70S ribosome quality control and in maturation of the 3' terminus of the 16S rRNA.</text>
</comment>
<comment type="cofactor">
    <cofactor evidence="1">
        <name>Zn(2+)</name>
        <dbReference type="ChEBI" id="CHEBI:29105"/>
    </cofactor>
    <text evidence="1">Binds 1 zinc ion.</text>
</comment>
<comment type="subcellular location">
    <subcellularLocation>
        <location evidence="1">Cytoplasm</location>
    </subcellularLocation>
</comment>
<comment type="similarity">
    <text evidence="1">Belongs to the endoribonuclease YbeY family.</text>
</comment>
<gene>
    <name evidence="1" type="primary">ybeY</name>
    <name type="ordered locus">BAD_0721</name>
</gene>
<dbReference type="EC" id="3.1.-.-" evidence="1"/>
<dbReference type="EMBL" id="AP009256">
    <property type="protein sequence ID" value="BAF39502.1"/>
    <property type="molecule type" value="Genomic_DNA"/>
</dbReference>
<dbReference type="RefSeq" id="WP_011743132.1">
    <property type="nucleotide sequence ID" value="NC_008618.1"/>
</dbReference>
<dbReference type="SMR" id="A1A1B9"/>
<dbReference type="STRING" id="367928.BAD_0721"/>
<dbReference type="PaxDb" id="1680-BADO_0767"/>
<dbReference type="GeneID" id="4557314"/>
<dbReference type="KEGG" id="bad:BAD_0721"/>
<dbReference type="HOGENOM" id="CLU_106710_3_2_11"/>
<dbReference type="Proteomes" id="UP000008702">
    <property type="component" value="Chromosome"/>
</dbReference>
<dbReference type="GO" id="GO:0005737">
    <property type="term" value="C:cytoplasm"/>
    <property type="evidence" value="ECO:0007669"/>
    <property type="project" value="UniProtKB-SubCell"/>
</dbReference>
<dbReference type="GO" id="GO:0004222">
    <property type="term" value="F:metalloendopeptidase activity"/>
    <property type="evidence" value="ECO:0007669"/>
    <property type="project" value="InterPro"/>
</dbReference>
<dbReference type="GO" id="GO:0004521">
    <property type="term" value="F:RNA endonuclease activity"/>
    <property type="evidence" value="ECO:0007669"/>
    <property type="project" value="UniProtKB-UniRule"/>
</dbReference>
<dbReference type="GO" id="GO:0008270">
    <property type="term" value="F:zinc ion binding"/>
    <property type="evidence" value="ECO:0007669"/>
    <property type="project" value="UniProtKB-UniRule"/>
</dbReference>
<dbReference type="GO" id="GO:0006364">
    <property type="term" value="P:rRNA processing"/>
    <property type="evidence" value="ECO:0007669"/>
    <property type="project" value="UniProtKB-UniRule"/>
</dbReference>
<dbReference type="Gene3D" id="3.40.390.30">
    <property type="entry name" value="Metalloproteases ('zincins'), catalytic domain"/>
    <property type="match status" value="1"/>
</dbReference>
<dbReference type="HAMAP" id="MF_00009">
    <property type="entry name" value="Endoribonucl_YbeY"/>
    <property type="match status" value="1"/>
</dbReference>
<dbReference type="InterPro" id="IPR023091">
    <property type="entry name" value="MetalPrtase_cat_dom_sf_prd"/>
</dbReference>
<dbReference type="InterPro" id="IPR002036">
    <property type="entry name" value="YbeY"/>
</dbReference>
<dbReference type="InterPro" id="IPR020549">
    <property type="entry name" value="YbeY_CS"/>
</dbReference>
<dbReference type="NCBIfam" id="TIGR00043">
    <property type="entry name" value="rRNA maturation RNase YbeY"/>
    <property type="match status" value="1"/>
</dbReference>
<dbReference type="PANTHER" id="PTHR46986">
    <property type="entry name" value="ENDORIBONUCLEASE YBEY, CHLOROPLASTIC"/>
    <property type="match status" value="1"/>
</dbReference>
<dbReference type="PANTHER" id="PTHR46986:SF1">
    <property type="entry name" value="ENDORIBONUCLEASE YBEY, CHLOROPLASTIC"/>
    <property type="match status" value="1"/>
</dbReference>
<dbReference type="Pfam" id="PF02130">
    <property type="entry name" value="YbeY"/>
    <property type="match status" value="1"/>
</dbReference>
<dbReference type="SUPFAM" id="SSF55486">
    <property type="entry name" value="Metalloproteases ('zincins'), catalytic domain"/>
    <property type="match status" value="1"/>
</dbReference>
<dbReference type="PROSITE" id="PS01306">
    <property type="entry name" value="UPF0054"/>
    <property type="match status" value="1"/>
</dbReference>
<evidence type="ECO:0000255" key="1">
    <source>
        <dbReference type="HAMAP-Rule" id="MF_00009"/>
    </source>
</evidence>
<protein>
    <recommendedName>
        <fullName evidence="1">Endoribonuclease YbeY</fullName>
        <ecNumber evidence="1">3.1.-.-</ecNumber>
    </recommendedName>
</protein>
<keyword id="KW-0963">Cytoplasm</keyword>
<keyword id="KW-0255">Endonuclease</keyword>
<keyword id="KW-0378">Hydrolase</keyword>
<keyword id="KW-0479">Metal-binding</keyword>
<keyword id="KW-0540">Nuclease</keyword>
<keyword id="KW-1185">Reference proteome</keyword>
<keyword id="KW-0690">Ribosome biogenesis</keyword>
<keyword id="KW-0698">rRNA processing</keyword>
<keyword id="KW-0862">Zinc</keyword>